<dbReference type="EC" id="4.1.1.130" evidence="1"/>
<dbReference type="EMBL" id="AAAB01008900">
    <property type="protein sequence ID" value="EAA09384.4"/>
    <property type="molecule type" value="Genomic_DNA"/>
</dbReference>
<dbReference type="EMBL" id="AAAB01008900">
    <property type="protein sequence ID" value="EDO64106.1"/>
    <property type="molecule type" value="Genomic_DNA"/>
</dbReference>
<dbReference type="RefSeq" id="XP_001688523.1">
    <property type="nucleotide sequence ID" value="XM_001688471.1"/>
</dbReference>
<dbReference type="RefSeq" id="XP_314100.4">
    <property type="nucleotide sequence ID" value="XM_314100.4"/>
</dbReference>
<dbReference type="SMR" id="Q7Q9J8"/>
<dbReference type="FunCoup" id="Q7Q9J8">
    <property type="interactions" value="788"/>
</dbReference>
<dbReference type="STRING" id="7165.Q7Q9J8"/>
<dbReference type="PaxDb" id="7165-AGAP005199-PA"/>
<dbReference type="EnsemblMetazoa" id="AGAP029855-RA">
    <property type="protein sequence ID" value="AGAP029855-PA"/>
    <property type="gene ID" value="AGAP029855"/>
</dbReference>
<dbReference type="KEGG" id="aga:1274906"/>
<dbReference type="VEuPathDB" id="VectorBase:AGAMI1_012235"/>
<dbReference type="VEuPathDB" id="VectorBase:AGAP029855"/>
<dbReference type="eggNOG" id="KOG3244">
    <property type="taxonomic scope" value="Eukaryota"/>
</dbReference>
<dbReference type="HOGENOM" id="CLU_061241_1_1_1"/>
<dbReference type="InParanoid" id="Q7Q9J8"/>
<dbReference type="OMA" id="YYERHFH"/>
<dbReference type="PhylomeDB" id="Q7Q9J8"/>
<dbReference type="UniPathway" id="UPA00232"/>
<dbReference type="Proteomes" id="UP000007062">
    <property type="component" value="Chromosome 2L"/>
</dbReference>
<dbReference type="GO" id="GO:0031314">
    <property type="term" value="C:extrinsic component of mitochondrial inner membrane"/>
    <property type="evidence" value="ECO:0007669"/>
    <property type="project" value="UniProtKB-UniRule"/>
</dbReference>
<dbReference type="GO" id="GO:0005739">
    <property type="term" value="C:mitochondrion"/>
    <property type="evidence" value="ECO:0000318"/>
    <property type="project" value="GO_Central"/>
</dbReference>
<dbReference type="GO" id="GO:0006744">
    <property type="term" value="P:ubiquinone biosynthetic process"/>
    <property type="evidence" value="ECO:0007669"/>
    <property type="project" value="UniProtKB-UniRule"/>
</dbReference>
<dbReference type="HAMAP" id="MF_03111">
    <property type="entry name" value="Coq4"/>
    <property type="match status" value="1"/>
</dbReference>
<dbReference type="InterPro" id="IPR007715">
    <property type="entry name" value="Coq4"/>
</dbReference>
<dbReference type="InterPro" id="IPR027540">
    <property type="entry name" value="Coq4_euk"/>
</dbReference>
<dbReference type="PANTHER" id="PTHR12922">
    <property type="entry name" value="UBIQUINONE BIOSYNTHESIS PROTEIN"/>
    <property type="match status" value="1"/>
</dbReference>
<dbReference type="PANTHER" id="PTHR12922:SF7">
    <property type="entry name" value="UBIQUINONE BIOSYNTHESIS PROTEIN COQ4 HOMOLOG, MITOCHONDRIAL"/>
    <property type="match status" value="1"/>
</dbReference>
<dbReference type="Pfam" id="PF05019">
    <property type="entry name" value="Coq4"/>
    <property type="match status" value="1"/>
</dbReference>
<name>COQ4_ANOGA</name>
<proteinExistence type="inferred from homology"/>
<protein>
    <recommendedName>
        <fullName evidence="1">Ubiquinone biosynthesis protein COQ4 homolog, mitochondrial</fullName>
    </recommendedName>
    <alternativeName>
        <fullName>4-hydroxy-3-methoxy-5-polyprenylbenzoate decarboxylase</fullName>
        <ecNumber evidence="1">4.1.1.130</ecNumber>
    </alternativeName>
    <alternativeName>
        <fullName evidence="1">Coenzyme Q biosynthesis protein 4 homolog</fullName>
    </alternativeName>
</protein>
<organism>
    <name type="scientific">Anopheles gambiae</name>
    <name type="common">African malaria mosquito</name>
    <dbReference type="NCBI Taxonomy" id="7165"/>
    <lineage>
        <taxon>Eukaryota</taxon>
        <taxon>Metazoa</taxon>
        <taxon>Ecdysozoa</taxon>
        <taxon>Arthropoda</taxon>
        <taxon>Hexapoda</taxon>
        <taxon>Insecta</taxon>
        <taxon>Pterygota</taxon>
        <taxon>Neoptera</taxon>
        <taxon>Endopterygota</taxon>
        <taxon>Diptera</taxon>
        <taxon>Nematocera</taxon>
        <taxon>Culicoidea</taxon>
        <taxon>Culicidae</taxon>
        <taxon>Anophelinae</taxon>
        <taxon>Anopheles</taxon>
    </lineage>
</organism>
<evidence type="ECO:0000255" key="1">
    <source>
        <dbReference type="HAMAP-Rule" id="MF_03111"/>
    </source>
</evidence>
<gene>
    <name type="ORF">AGAP005199</name>
</gene>
<reference key="1">
    <citation type="journal article" date="2002" name="Science">
        <title>The genome sequence of the malaria mosquito Anopheles gambiae.</title>
        <authorList>
            <person name="Holt R.A."/>
            <person name="Subramanian G.M."/>
            <person name="Halpern A."/>
            <person name="Sutton G.G."/>
            <person name="Charlab R."/>
            <person name="Nusskern D.R."/>
            <person name="Wincker P."/>
            <person name="Clark A.G."/>
            <person name="Ribeiro J.M.C."/>
            <person name="Wides R."/>
            <person name="Salzberg S.L."/>
            <person name="Loftus B.J."/>
            <person name="Yandell M.D."/>
            <person name="Majoros W.H."/>
            <person name="Rusch D.B."/>
            <person name="Lai Z."/>
            <person name="Kraft C.L."/>
            <person name="Abril J.F."/>
            <person name="Anthouard V."/>
            <person name="Arensburger P."/>
            <person name="Atkinson P.W."/>
            <person name="Baden H."/>
            <person name="de Berardinis V."/>
            <person name="Baldwin D."/>
            <person name="Benes V."/>
            <person name="Biedler J."/>
            <person name="Blass C."/>
            <person name="Bolanos R."/>
            <person name="Boscus D."/>
            <person name="Barnstead M."/>
            <person name="Cai S."/>
            <person name="Center A."/>
            <person name="Chaturverdi K."/>
            <person name="Christophides G.K."/>
            <person name="Chrystal M.A.M."/>
            <person name="Clamp M."/>
            <person name="Cravchik A."/>
            <person name="Curwen V."/>
            <person name="Dana A."/>
            <person name="Delcher A."/>
            <person name="Dew I."/>
            <person name="Evans C.A."/>
            <person name="Flanigan M."/>
            <person name="Grundschober-Freimoser A."/>
            <person name="Friedli L."/>
            <person name="Gu Z."/>
            <person name="Guan P."/>
            <person name="Guigo R."/>
            <person name="Hillenmeyer M.E."/>
            <person name="Hladun S.L."/>
            <person name="Hogan J.R."/>
            <person name="Hong Y.S."/>
            <person name="Hoover J."/>
            <person name="Jaillon O."/>
            <person name="Ke Z."/>
            <person name="Kodira C.D."/>
            <person name="Kokoza E."/>
            <person name="Koutsos A."/>
            <person name="Letunic I."/>
            <person name="Levitsky A.A."/>
            <person name="Liang Y."/>
            <person name="Lin J.-J."/>
            <person name="Lobo N.F."/>
            <person name="Lopez J.R."/>
            <person name="Malek J.A."/>
            <person name="McIntosh T.C."/>
            <person name="Meister S."/>
            <person name="Miller J.R."/>
            <person name="Mobarry C."/>
            <person name="Mongin E."/>
            <person name="Murphy S.D."/>
            <person name="O'Brochta D.A."/>
            <person name="Pfannkoch C."/>
            <person name="Qi R."/>
            <person name="Regier M.A."/>
            <person name="Remington K."/>
            <person name="Shao H."/>
            <person name="Sharakhova M.V."/>
            <person name="Sitter C.D."/>
            <person name="Shetty J."/>
            <person name="Smith T.J."/>
            <person name="Strong R."/>
            <person name="Sun J."/>
            <person name="Thomasova D."/>
            <person name="Ton L.Q."/>
            <person name="Topalis P."/>
            <person name="Tu Z.J."/>
            <person name="Unger M.F."/>
            <person name="Walenz B."/>
            <person name="Wang A.H."/>
            <person name="Wang J."/>
            <person name="Wang M."/>
            <person name="Wang X."/>
            <person name="Woodford K.J."/>
            <person name="Wortman J.R."/>
            <person name="Wu M."/>
            <person name="Yao A."/>
            <person name="Zdobnov E.M."/>
            <person name="Zhang H."/>
            <person name="Zhao Q."/>
            <person name="Zhao S."/>
            <person name="Zhu S.C."/>
            <person name="Zhimulev I."/>
            <person name="Coluzzi M."/>
            <person name="della Torre A."/>
            <person name="Roth C.W."/>
            <person name="Louis C."/>
            <person name="Kalush F."/>
            <person name="Mural R.J."/>
            <person name="Myers E.W."/>
            <person name="Adams M.D."/>
            <person name="Smith H.O."/>
            <person name="Broder S."/>
            <person name="Gardner M.J."/>
            <person name="Fraser C.M."/>
            <person name="Birney E."/>
            <person name="Bork P."/>
            <person name="Brey P.T."/>
            <person name="Venter J.C."/>
            <person name="Weissenbach J."/>
            <person name="Kafatos F.C."/>
            <person name="Collins F.H."/>
            <person name="Hoffman S.L."/>
        </authorList>
    </citation>
    <scope>NUCLEOTIDE SEQUENCE [LARGE SCALE GENOMIC DNA]</scope>
    <source>
        <strain>PEST</strain>
    </source>
</reference>
<feature type="transit peptide" description="Mitochondrion" evidence="1">
    <location>
        <begin position="1"/>
        <end position="30"/>
    </location>
</feature>
<feature type="chain" id="PRO_0000388057" description="Ubiquinone biosynthesis protein COQ4 homolog, mitochondrial">
    <location>
        <begin position="31"/>
        <end position="282"/>
    </location>
</feature>
<feature type="binding site" evidence="1">
    <location>
        <position position="186"/>
    </location>
    <ligand>
        <name>Zn(2+)</name>
        <dbReference type="ChEBI" id="CHEBI:29105"/>
    </ligand>
</feature>
<feature type="binding site" evidence="1">
    <location>
        <position position="187"/>
    </location>
    <ligand>
        <name>Zn(2+)</name>
        <dbReference type="ChEBI" id="CHEBI:29105"/>
    </ligand>
</feature>
<feature type="binding site" evidence="1">
    <location>
        <position position="190"/>
    </location>
    <ligand>
        <name>Zn(2+)</name>
        <dbReference type="ChEBI" id="CHEBI:29105"/>
    </ligand>
</feature>
<feature type="binding site" evidence="1">
    <location>
        <position position="202"/>
    </location>
    <ligand>
        <name>Zn(2+)</name>
        <dbReference type="ChEBI" id="CHEBI:29105"/>
    </ligand>
</feature>
<keyword id="KW-0456">Lyase</keyword>
<keyword id="KW-0472">Membrane</keyword>
<keyword id="KW-0479">Metal-binding</keyword>
<keyword id="KW-0496">Mitochondrion</keyword>
<keyword id="KW-0999">Mitochondrion inner membrane</keyword>
<keyword id="KW-1185">Reference proteome</keyword>
<keyword id="KW-0809">Transit peptide</keyword>
<keyword id="KW-0831">Ubiquinone biosynthesis</keyword>
<keyword id="KW-0862">Zinc</keyword>
<accession>Q7Q9J8</accession>
<comment type="function">
    <text evidence="1">Lyase that catalyzes the C1-decarboxylation of 4-hydroxy-3-methoxy-5-(all-trans-polyprenyl)benzoic acid into 2-methoxy-6-(all-trans-polyprenyl)phenol during ubiquinone biosynthesis.</text>
</comment>
<comment type="catalytic activity">
    <reaction evidence="1">
        <text>a 4-hydroxy-3-methoxy-5-(all-trans-polyprenyl)benzoate + H(+) = a 2-methoxy-6-(all-trans-polyprenyl)phenol + CO2</text>
        <dbReference type="Rhea" id="RHEA:81179"/>
        <dbReference type="Rhea" id="RHEA-COMP:9551"/>
        <dbReference type="Rhea" id="RHEA-COMP:10931"/>
        <dbReference type="ChEBI" id="CHEBI:15378"/>
        <dbReference type="ChEBI" id="CHEBI:16526"/>
        <dbReference type="ChEBI" id="CHEBI:62731"/>
        <dbReference type="ChEBI" id="CHEBI:84443"/>
        <dbReference type="EC" id="4.1.1.130"/>
    </reaction>
</comment>
<comment type="cofactor">
    <cofactor evidence="1">
        <name>Zn(2+)</name>
        <dbReference type="ChEBI" id="CHEBI:29105"/>
    </cofactor>
</comment>
<comment type="pathway">
    <text evidence="1">Cofactor biosynthesis; ubiquinone biosynthesis.</text>
</comment>
<comment type="subunit">
    <text evidence="1">Component of a multi-subunit COQ enzyme complex.</text>
</comment>
<comment type="subcellular location">
    <subcellularLocation>
        <location evidence="1">Mitochondrion inner membrane</location>
        <topology evidence="1">Peripheral membrane protein</topology>
        <orientation evidence="1">Matrix side</orientation>
    </subcellularLocation>
</comment>
<comment type="similarity">
    <text evidence="1">Belongs to the COQ4 family.</text>
</comment>
<sequence>MFVRKSCYSLINATRRCLRYRQLSSTTAGTVGTTAPTANISLNDEPQPAAAEMDEFTKEFLRNRIEVSDIQRLILSAGSSVAALVDPRRHDMIACLGETTGREALEKILHYMRSTEEGQRILVEKPRINTRTVDMEALKKMPEHTFGYTYVKFMEDNNITPDSRMEVRFLDEPGLAYVMTRYRETHDMVHAILDMPTNMLGEVTVKWVEALNTGLPMCYGGAVFGAFRLRTKQRQNYLRKYLPWALRTGNRIKPLMGVYWEKRWEQDVTELRKELNIELLAP</sequence>